<name>SYI_PROM1</name>
<proteinExistence type="inferred from homology"/>
<keyword id="KW-0030">Aminoacyl-tRNA synthetase</keyword>
<keyword id="KW-0067">ATP-binding</keyword>
<keyword id="KW-0963">Cytoplasm</keyword>
<keyword id="KW-0436">Ligase</keyword>
<keyword id="KW-0479">Metal-binding</keyword>
<keyword id="KW-0547">Nucleotide-binding</keyword>
<keyword id="KW-0648">Protein biosynthesis</keyword>
<keyword id="KW-0862">Zinc</keyword>
<protein>
    <recommendedName>
        <fullName evidence="1">Isoleucine--tRNA ligase</fullName>
        <ecNumber evidence="1">6.1.1.5</ecNumber>
    </recommendedName>
    <alternativeName>
        <fullName evidence="1">Isoleucyl-tRNA synthetase</fullName>
        <shortName evidence="1">IleRS</shortName>
    </alternativeName>
</protein>
<feature type="chain" id="PRO_1000022098" description="Isoleucine--tRNA ligase">
    <location>
        <begin position="1"/>
        <end position="967"/>
    </location>
</feature>
<feature type="short sequence motif" description="'HIGH' region">
    <location>
        <begin position="68"/>
        <end position="78"/>
    </location>
</feature>
<feature type="short sequence motif" description="'KMSKS' region">
    <location>
        <begin position="624"/>
        <end position="628"/>
    </location>
</feature>
<feature type="binding site" evidence="1">
    <location>
        <position position="583"/>
    </location>
    <ligand>
        <name>L-isoleucyl-5'-AMP</name>
        <dbReference type="ChEBI" id="CHEBI:178002"/>
    </ligand>
</feature>
<feature type="binding site" evidence="1">
    <location>
        <position position="627"/>
    </location>
    <ligand>
        <name>ATP</name>
        <dbReference type="ChEBI" id="CHEBI:30616"/>
    </ligand>
</feature>
<feature type="binding site" evidence="1">
    <location>
        <position position="937"/>
    </location>
    <ligand>
        <name>Zn(2+)</name>
        <dbReference type="ChEBI" id="CHEBI:29105"/>
    </ligand>
</feature>
<feature type="binding site" evidence="1">
    <location>
        <position position="940"/>
    </location>
    <ligand>
        <name>Zn(2+)</name>
        <dbReference type="ChEBI" id="CHEBI:29105"/>
    </ligand>
</feature>
<feature type="binding site" evidence="1">
    <location>
        <position position="957"/>
    </location>
    <ligand>
        <name>Zn(2+)</name>
        <dbReference type="ChEBI" id="CHEBI:29105"/>
    </ligand>
</feature>
<feature type="binding site" evidence="1">
    <location>
        <position position="960"/>
    </location>
    <ligand>
        <name>Zn(2+)</name>
        <dbReference type="ChEBI" id="CHEBI:29105"/>
    </ligand>
</feature>
<dbReference type="EC" id="6.1.1.5" evidence="1"/>
<dbReference type="EMBL" id="CP000553">
    <property type="protein sequence ID" value="ABM74881.1"/>
    <property type="molecule type" value="Genomic_DNA"/>
</dbReference>
<dbReference type="RefSeq" id="WP_011823091.1">
    <property type="nucleotide sequence ID" value="NC_008819.1"/>
</dbReference>
<dbReference type="SMR" id="A2C071"/>
<dbReference type="KEGG" id="pme:NATL1_03171"/>
<dbReference type="eggNOG" id="COG0060">
    <property type="taxonomic scope" value="Bacteria"/>
</dbReference>
<dbReference type="HOGENOM" id="CLU_001493_7_0_3"/>
<dbReference type="Proteomes" id="UP000002592">
    <property type="component" value="Chromosome"/>
</dbReference>
<dbReference type="GO" id="GO:0005737">
    <property type="term" value="C:cytoplasm"/>
    <property type="evidence" value="ECO:0007669"/>
    <property type="project" value="UniProtKB-SubCell"/>
</dbReference>
<dbReference type="GO" id="GO:0002161">
    <property type="term" value="F:aminoacyl-tRNA deacylase activity"/>
    <property type="evidence" value="ECO:0007669"/>
    <property type="project" value="InterPro"/>
</dbReference>
<dbReference type="GO" id="GO:0005524">
    <property type="term" value="F:ATP binding"/>
    <property type="evidence" value="ECO:0007669"/>
    <property type="project" value="UniProtKB-UniRule"/>
</dbReference>
<dbReference type="GO" id="GO:0004822">
    <property type="term" value="F:isoleucine-tRNA ligase activity"/>
    <property type="evidence" value="ECO:0007669"/>
    <property type="project" value="UniProtKB-UniRule"/>
</dbReference>
<dbReference type="GO" id="GO:0000049">
    <property type="term" value="F:tRNA binding"/>
    <property type="evidence" value="ECO:0007669"/>
    <property type="project" value="InterPro"/>
</dbReference>
<dbReference type="GO" id="GO:0008270">
    <property type="term" value="F:zinc ion binding"/>
    <property type="evidence" value="ECO:0007669"/>
    <property type="project" value="UniProtKB-UniRule"/>
</dbReference>
<dbReference type="GO" id="GO:0006428">
    <property type="term" value="P:isoleucyl-tRNA aminoacylation"/>
    <property type="evidence" value="ECO:0007669"/>
    <property type="project" value="UniProtKB-UniRule"/>
</dbReference>
<dbReference type="CDD" id="cd07960">
    <property type="entry name" value="Anticodon_Ia_Ile_BEm"/>
    <property type="match status" value="1"/>
</dbReference>
<dbReference type="FunFam" id="3.40.50.620:FF:000111">
    <property type="entry name" value="Mitochondrial isoleucyl-tRNA synthetase"/>
    <property type="match status" value="1"/>
</dbReference>
<dbReference type="Gene3D" id="1.10.730.20">
    <property type="match status" value="1"/>
</dbReference>
<dbReference type="Gene3D" id="3.40.50.620">
    <property type="entry name" value="HUPs"/>
    <property type="match status" value="2"/>
</dbReference>
<dbReference type="Gene3D" id="3.90.740.10">
    <property type="entry name" value="Valyl/Leucyl/Isoleucyl-tRNA synthetase, editing domain"/>
    <property type="match status" value="1"/>
</dbReference>
<dbReference type="HAMAP" id="MF_02002">
    <property type="entry name" value="Ile_tRNA_synth_type1"/>
    <property type="match status" value="1"/>
</dbReference>
<dbReference type="InterPro" id="IPR001412">
    <property type="entry name" value="aa-tRNA-synth_I_CS"/>
</dbReference>
<dbReference type="InterPro" id="IPR002300">
    <property type="entry name" value="aa-tRNA-synth_Ia"/>
</dbReference>
<dbReference type="InterPro" id="IPR033708">
    <property type="entry name" value="Anticodon_Ile_BEm"/>
</dbReference>
<dbReference type="InterPro" id="IPR002301">
    <property type="entry name" value="Ile-tRNA-ligase"/>
</dbReference>
<dbReference type="InterPro" id="IPR023585">
    <property type="entry name" value="Ile-tRNA-ligase_type1"/>
</dbReference>
<dbReference type="InterPro" id="IPR050081">
    <property type="entry name" value="Ile-tRNA_ligase"/>
</dbReference>
<dbReference type="InterPro" id="IPR013155">
    <property type="entry name" value="M/V/L/I-tRNA-synth_anticd-bd"/>
</dbReference>
<dbReference type="InterPro" id="IPR014729">
    <property type="entry name" value="Rossmann-like_a/b/a_fold"/>
</dbReference>
<dbReference type="InterPro" id="IPR009080">
    <property type="entry name" value="tRNAsynth_Ia_anticodon-bd"/>
</dbReference>
<dbReference type="InterPro" id="IPR009008">
    <property type="entry name" value="Val/Leu/Ile-tRNA-synth_edit"/>
</dbReference>
<dbReference type="InterPro" id="IPR010663">
    <property type="entry name" value="Znf_FPG/IleRS"/>
</dbReference>
<dbReference type="NCBIfam" id="TIGR00392">
    <property type="entry name" value="ileS"/>
    <property type="match status" value="1"/>
</dbReference>
<dbReference type="PANTHER" id="PTHR42765:SF1">
    <property type="entry name" value="ISOLEUCINE--TRNA LIGASE, MITOCHONDRIAL"/>
    <property type="match status" value="1"/>
</dbReference>
<dbReference type="PANTHER" id="PTHR42765">
    <property type="entry name" value="SOLEUCYL-TRNA SYNTHETASE"/>
    <property type="match status" value="1"/>
</dbReference>
<dbReference type="Pfam" id="PF08264">
    <property type="entry name" value="Anticodon_1"/>
    <property type="match status" value="1"/>
</dbReference>
<dbReference type="Pfam" id="PF00133">
    <property type="entry name" value="tRNA-synt_1"/>
    <property type="match status" value="1"/>
</dbReference>
<dbReference type="Pfam" id="PF06827">
    <property type="entry name" value="zf-FPG_IleRS"/>
    <property type="match status" value="1"/>
</dbReference>
<dbReference type="PRINTS" id="PR00984">
    <property type="entry name" value="TRNASYNTHILE"/>
</dbReference>
<dbReference type="SUPFAM" id="SSF47323">
    <property type="entry name" value="Anticodon-binding domain of a subclass of class I aminoacyl-tRNA synthetases"/>
    <property type="match status" value="1"/>
</dbReference>
<dbReference type="SUPFAM" id="SSF52374">
    <property type="entry name" value="Nucleotidylyl transferase"/>
    <property type="match status" value="1"/>
</dbReference>
<dbReference type="SUPFAM" id="SSF50677">
    <property type="entry name" value="ValRS/IleRS/LeuRS editing domain"/>
    <property type="match status" value="1"/>
</dbReference>
<dbReference type="PROSITE" id="PS00178">
    <property type="entry name" value="AA_TRNA_LIGASE_I"/>
    <property type="match status" value="1"/>
</dbReference>
<organism>
    <name type="scientific">Prochlorococcus marinus (strain NATL1A)</name>
    <dbReference type="NCBI Taxonomy" id="167555"/>
    <lineage>
        <taxon>Bacteria</taxon>
        <taxon>Bacillati</taxon>
        <taxon>Cyanobacteriota</taxon>
        <taxon>Cyanophyceae</taxon>
        <taxon>Synechococcales</taxon>
        <taxon>Prochlorococcaceae</taxon>
        <taxon>Prochlorococcus</taxon>
    </lineage>
</organism>
<gene>
    <name evidence="1" type="primary">ileS</name>
    <name type="ordered locus">NATL1_03171</name>
</gene>
<sequence>MNNINKNSQKDRPTYKDTLNLLQTNFGMRANATLREPELQAFWREKNIDFELGLNNTGETFTLHDGPPYANGTLHMGHALNKVLKDIINKFQTMKGKKVCYVPGWDCHGLPIELKVLQAMDKSQRAELTPIKLRKKAAAYAKKQVSQQMDGFKRWGVWGDWDQPYLSLDKKFEASQIKLFGEMVFKGYIYRGLKPVHWSPSSQTALAEAELEYPTGHTSKSIYVGFKVNQIPKRLTQEISKQAPDLINSEGKLKEVKLVIWTTTPWTIPANEAISVNQKLEYVIAQSSDRSLIIIANDLLDEVSKSVGINYEKRVLIKGSILDGIIYKHPLFDKISPVVLGGDYITTESGTGLVHTAPGHGVDDFNTGKKYNLSISCTVDAKGFLTKEAGKYEGLNVLKDANSVIISDLINSGSLLKEIPYEHRYPYDWRTKKPTIFRATEQWFASVEGFRDKALSAIEDVIWLPESGKNRINSMVRERGDWCISRQRTWGVPIPVFYEKNGQEILLNKETISHIADLFSVHGADIWWEYEVSELLPPSYLNQADRWQKGTDTMDVWFDSGSSWSSVISKKENLNYPADLYLEGSDQHRGWFQSSLLTSVAVNEHAPFKKVLTHGFALDENGRKMSKSLGNIIDPLVIINGGSNKKLDPAYGADVLRLWVSSVDYSADVPIGSNILKQISDVYRKVRNTSRYLLGNLYDFDYKIDSIDIANLPLLDKWMLNRTAEVIDEISDAYNNFEFSKFFQTIQNFCVVDLSNFYLDIAKDRLYVSSKSDFRRRSCQTVLSLVIEKISGLIAPVLCHMAEDIWQNIPYDLEEASVFQRGWPNVPKSWRNSSFNCHVTELRKLRAVINRMLESCRNNQALGSSLEASVRVDISDEKVQAAIEWLAESESNNVDVLRDWFLVSSLQIGGEPWAEVLVSEDNDYASVEIAKARGFKCERCWHYEIEMSKNPQHTNICKRCEKVVLAI</sequence>
<evidence type="ECO:0000255" key="1">
    <source>
        <dbReference type="HAMAP-Rule" id="MF_02002"/>
    </source>
</evidence>
<reference key="1">
    <citation type="journal article" date="2007" name="PLoS Genet.">
        <title>Patterns and implications of gene gain and loss in the evolution of Prochlorococcus.</title>
        <authorList>
            <person name="Kettler G.C."/>
            <person name="Martiny A.C."/>
            <person name="Huang K."/>
            <person name="Zucker J."/>
            <person name="Coleman M.L."/>
            <person name="Rodrigue S."/>
            <person name="Chen F."/>
            <person name="Lapidus A."/>
            <person name="Ferriera S."/>
            <person name="Johnson J."/>
            <person name="Steglich C."/>
            <person name="Church G.M."/>
            <person name="Richardson P."/>
            <person name="Chisholm S.W."/>
        </authorList>
    </citation>
    <scope>NUCLEOTIDE SEQUENCE [LARGE SCALE GENOMIC DNA]</scope>
    <source>
        <strain>NATL1A</strain>
    </source>
</reference>
<comment type="function">
    <text evidence="1">Catalyzes the attachment of isoleucine to tRNA(Ile). As IleRS can inadvertently accommodate and process structurally similar amino acids such as valine, to avoid such errors it has two additional distinct tRNA(Ile)-dependent editing activities. One activity is designated as 'pretransfer' editing and involves the hydrolysis of activated Val-AMP. The other activity is designated 'posttransfer' editing and involves deacylation of mischarged Val-tRNA(Ile).</text>
</comment>
<comment type="catalytic activity">
    <reaction evidence="1">
        <text>tRNA(Ile) + L-isoleucine + ATP = L-isoleucyl-tRNA(Ile) + AMP + diphosphate</text>
        <dbReference type="Rhea" id="RHEA:11060"/>
        <dbReference type="Rhea" id="RHEA-COMP:9666"/>
        <dbReference type="Rhea" id="RHEA-COMP:9695"/>
        <dbReference type="ChEBI" id="CHEBI:30616"/>
        <dbReference type="ChEBI" id="CHEBI:33019"/>
        <dbReference type="ChEBI" id="CHEBI:58045"/>
        <dbReference type="ChEBI" id="CHEBI:78442"/>
        <dbReference type="ChEBI" id="CHEBI:78528"/>
        <dbReference type="ChEBI" id="CHEBI:456215"/>
        <dbReference type="EC" id="6.1.1.5"/>
    </reaction>
</comment>
<comment type="cofactor">
    <cofactor evidence="1">
        <name>Zn(2+)</name>
        <dbReference type="ChEBI" id="CHEBI:29105"/>
    </cofactor>
    <text evidence="1">Binds 1 zinc ion per subunit.</text>
</comment>
<comment type="subunit">
    <text evidence="1">Monomer.</text>
</comment>
<comment type="subcellular location">
    <subcellularLocation>
        <location evidence="1">Cytoplasm</location>
    </subcellularLocation>
</comment>
<comment type="domain">
    <text evidence="1">IleRS has two distinct active sites: one for aminoacylation and one for editing. The misactivated valine is translocated from the active site to the editing site, which sterically excludes the correctly activated isoleucine. The single editing site contains two valyl binding pockets, one specific for each substrate (Val-AMP or Val-tRNA(Ile)).</text>
</comment>
<comment type="similarity">
    <text evidence="1">Belongs to the class-I aminoacyl-tRNA synthetase family. IleS type 1 subfamily.</text>
</comment>
<accession>A2C071</accession>